<dbReference type="EMBL" id="AK077909">
    <property type="protein sequence ID" value="BAC37056.1"/>
    <property type="molecule type" value="mRNA"/>
</dbReference>
<dbReference type="EMBL" id="AK077467">
    <property type="protein sequence ID" value="BAC36814.1"/>
    <property type="status" value="ALT_FRAME"/>
    <property type="molecule type" value="mRNA"/>
</dbReference>
<dbReference type="EMBL" id="BC045150">
    <property type="protein sequence ID" value="AAH45150.1"/>
    <property type="molecule type" value="mRNA"/>
</dbReference>
<dbReference type="CCDS" id="CCDS38879.1"/>
<dbReference type="RefSeq" id="NP_766289.2">
    <property type="nucleotide sequence ID" value="NM_172701.3"/>
</dbReference>
<dbReference type="FunCoup" id="Q8BHW2">
    <property type="interactions" value="755"/>
</dbReference>
<dbReference type="STRING" id="10090.ENSMUSP00000045241"/>
<dbReference type="PhosphoSitePlus" id="Q8BHW2"/>
<dbReference type="PaxDb" id="10090-ENSMUSP00000045241"/>
<dbReference type="ProteomicsDB" id="295476"/>
<dbReference type="Pumba" id="Q8BHW2"/>
<dbReference type="Antibodypedia" id="31691">
    <property type="antibodies" value="58 antibodies from 18 providers"/>
</dbReference>
<dbReference type="Ensembl" id="ENSMUST00000035497.5">
    <property type="protein sequence ID" value="ENSMUSP00000045241.5"/>
    <property type="gene ID" value="ENSMUSG00000042616.9"/>
</dbReference>
<dbReference type="GeneID" id="230751"/>
<dbReference type="KEGG" id="mmu:230751"/>
<dbReference type="UCSC" id="uc008ush.1">
    <property type="organism name" value="mouse"/>
</dbReference>
<dbReference type="AGR" id="MGI:1916308"/>
<dbReference type="CTD" id="127700"/>
<dbReference type="MGI" id="MGI:1916308">
    <property type="gene designation" value="Oscp1"/>
</dbReference>
<dbReference type="VEuPathDB" id="HostDB:ENSMUSG00000042616"/>
<dbReference type="eggNOG" id="KOG4033">
    <property type="taxonomic scope" value="Eukaryota"/>
</dbReference>
<dbReference type="GeneTree" id="ENSGT00390000004808"/>
<dbReference type="HOGENOM" id="CLU_039360_1_0_1"/>
<dbReference type="InParanoid" id="Q8BHW2"/>
<dbReference type="OMA" id="GTMFNKR"/>
<dbReference type="PhylomeDB" id="Q8BHW2"/>
<dbReference type="TreeFam" id="TF105789"/>
<dbReference type="BioGRID-ORCS" id="230751">
    <property type="hits" value="3 hits in 77 CRISPR screens"/>
</dbReference>
<dbReference type="ChiTaRS" id="Oscp1">
    <property type="organism name" value="mouse"/>
</dbReference>
<dbReference type="PRO" id="PR:Q8BHW2"/>
<dbReference type="Proteomes" id="UP000000589">
    <property type="component" value="Chromosome 4"/>
</dbReference>
<dbReference type="RNAct" id="Q8BHW2">
    <property type="molecule type" value="protein"/>
</dbReference>
<dbReference type="Bgee" id="ENSMUSG00000042616">
    <property type="expression patterns" value="Expressed in spermatid and 200 other cell types or tissues"/>
</dbReference>
<dbReference type="ExpressionAtlas" id="Q8BHW2">
    <property type="expression patterns" value="baseline and differential"/>
</dbReference>
<dbReference type="GO" id="GO:0009925">
    <property type="term" value="C:basal plasma membrane"/>
    <property type="evidence" value="ECO:0007669"/>
    <property type="project" value="UniProtKB-SubCell"/>
</dbReference>
<dbReference type="GO" id="GO:0005737">
    <property type="term" value="C:cytoplasm"/>
    <property type="evidence" value="ECO:0000314"/>
    <property type="project" value="MGI"/>
</dbReference>
<dbReference type="GO" id="GO:0022857">
    <property type="term" value="F:transmembrane transporter activity"/>
    <property type="evidence" value="ECO:0007669"/>
    <property type="project" value="Ensembl"/>
</dbReference>
<dbReference type="GO" id="GO:1990961">
    <property type="term" value="P:xenobiotic detoxification by transmembrane export across the plasma membrane"/>
    <property type="evidence" value="ECO:0007669"/>
    <property type="project" value="Ensembl"/>
</dbReference>
<dbReference type="InterPro" id="IPR019332">
    <property type="entry name" value="OSCP1"/>
</dbReference>
<dbReference type="PANTHER" id="PTHR21439">
    <property type="entry name" value="OXIDORED-NITRO DOMAIN-CONTAINING PROTEIN"/>
    <property type="match status" value="1"/>
</dbReference>
<dbReference type="PANTHER" id="PTHR21439:SF0">
    <property type="entry name" value="PROTEIN OSCP1"/>
    <property type="match status" value="1"/>
</dbReference>
<dbReference type="Pfam" id="PF10188">
    <property type="entry name" value="Oscp1"/>
    <property type="match status" value="1"/>
</dbReference>
<reference key="1">
    <citation type="journal article" date="2005" name="Science">
        <title>The transcriptional landscape of the mammalian genome.</title>
        <authorList>
            <person name="Carninci P."/>
            <person name="Kasukawa T."/>
            <person name="Katayama S."/>
            <person name="Gough J."/>
            <person name="Frith M.C."/>
            <person name="Maeda N."/>
            <person name="Oyama R."/>
            <person name="Ravasi T."/>
            <person name="Lenhard B."/>
            <person name="Wells C."/>
            <person name="Kodzius R."/>
            <person name="Shimokawa K."/>
            <person name="Bajic V.B."/>
            <person name="Brenner S.E."/>
            <person name="Batalov S."/>
            <person name="Forrest A.R."/>
            <person name="Zavolan M."/>
            <person name="Davis M.J."/>
            <person name="Wilming L.G."/>
            <person name="Aidinis V."/>
            <person name="Allen J.E."/>
            <person name="Ambesi-Impiombato A."/>
            <person name="Apweiler R."/>
            <person name="Aturaliya R.N."/>
            <person name="Bailey T.L."/>
            <person name="Bansal M."/>
            <person name="Baxter L."/>
            <person name="Beisel K.W."/>
            <person name="Bersano T."/>
            <person name="Bono H."/>
            <person name="Chalk A.M."/>
            <person name="Chiu K.P."/>
            <person name="Choudhary V."/>
            <person name="Christoffels A."/>
            <person name="Clutterbuck D.R."/>
            <person name="Crowe M.L."/>
            <person name="Dalla E."/>
            <person name="Dalrymple B.P."/>
            <person name="de Bono B."/>
            <person name="Della Gatta G."/>
            <person name="di Bernardo D."/>
            <person name="Down T."/>
            <person name="Engstrom P."/>
            <person name="Fagiolini M."/>
            <person name="Faulkner G."/>
            <person name="Fletcher C.F."/>
            <person name="Fukushima T."/>
            <person name="Furuno M."/>
            <person name="Futaki S."/>
            <person name="Gariboldi M."/>
            <person name="Georgii-Hemming P."/>
            <person name="Gingeras T.R."/>
            <person name="Gojobori T."/>
            <person name="Green R.E."/>
            <person name="Gustincich S."/>
            <person name="Harbers M."/>
            <person name="Hayashi Y."/>
            <person name="Hensch T.K."/>
            <person name="Hirokawa N."/>
            <person name="Hill D."/>
            <person name="Huminiecki L."/>
            <person name="Iacono M."/>
            <person name="Ikeo K."/>
            <person name="Iwama A."/>
            <person name="Ishikawa T."/>
            <person name="Jakt M."/>
            <person name="Kanapin A."/>
            <person name="Katoh M."/>
            <person name="Kawasawa Y."/>
            <person name="Kelso J."/>
            <person name="Kitamura H."/>
            <person name="Kitano H."/>
            <person name="Kollias G."/>
            <person name="Krishnan S.P."/>
            <person name="Kruger A."/>
            <person name="Kummerfeld S.K."/>
            <person name="Kurochkin I.V."/>
            <person name="Lareau L.F."/>
            <person name="Lazarevic D."/>
            <person name="Lipovich L."/>
            <person name="Liu J."/>
            <person name="Liuni S."/>
            <person name="McWilliam S."/>
            <person name="Madan Babu M."/>
            <person name="Madera M."/>
            <person name="Marchionni L."/>
            <person name="Matsuda H."/>
            <person name="Matsuzawa S."/>
            <person name="Miki H."/>
            <person name="Mignone F."/>
            <person name="Miyake S."/>
            <person name="Morris K."/>
            <person name="Mottagui-Tabar S."/>
            <person name="Mulder N."/>
            <person name="Nakano N."/>
            <person name="Nakauchi H."/>
            <person name="Ng P."/>
            <person name="Nilsson R."/>
            <person name="Nishiguchi S."/>
            <person name="Nishikawa S."/>
            <person name="Nori F."/>
            <person name="Ohara O."/>
            <person name="Okazaki Y."/>
            <person name="Orlando V."/>
            <person name="Pang K.C."/>
            <person name="Pavan W.J."/>
            <person name="Pavesi G."/>
            <person name="Pesole G."/>
            <person name="Petrovsky N."/>
            <person name="Piazza S."/>
            <person name="Reed J."/>
            <person name="Reid J.F."/>
            <person name="Ring B.Z."/>
            <person name="Ringwald M."/>
            <person name="Rost B."/>
            <person name="Ruan Y."/>
            <person name="Salzberg S.L."/>
            <person name="Sandelin A."/>
            <person name="Schneider C."/>
            <person name="Schoenbach C."/>
            <person name="Sekiguchi K."/>
            <person name="Semple C.A."/>
            <person name="Seno S."/>
            <person name="Sessa L."/>
            <person name="Sheng Y."/>
            <person name="Shibata Y."/>
            <person name="Shimada H."/>
            <person name="Shimada K."/>
            <person name="Silva D."/>
            <person name="Sinclair B."/>
            <person name="Sperling S."/>
            <person name="Stupka E."/>
            <person name="Sugiura K."/>
            <person name="Sultana R."/>
            <person name="Takenaka Y."/>
            <person name="Taki K."/>
            <person name="Tammoja K."/>
            <person name="Tan S.L."/>
            <person name="Tang S."/>
            <person name="Taylor M.S."/>
            <person name="Tegner J."/>
            <person name="Teichmann S.A."/>
            <person name="Ueda H.R."/>
            <person name="van Nimwegen E."/>
            <person name="Verardo R."/>
            <person name="Wei C.L."/>
            <person name="Yagi K."/>
            <person name="Yamanishi H."/>
            <person name="Zabarovsky E."/>
            <person name="Zhu S."/>
            <person name="Zimmer A."/>
            <person name="Hide W."/>
            <person name="Bult C."/>
            <person name="Grimmond S.M."/>
            <person name="Teasdale R.D."/>
            <person name="Liu E.T."/>
            <person name="Brusic V."/>
            <person name="Quackenbush J."/>
            <person name="Wahlestedt C."/>
            <person name="Mattick J.S."/>
            <person name="Hume D.A."/>
            <person name="Kai C."/>
            <person name="Sasaki D."/>
            <person name="Tomaru Y."/>
            <person name="Fukuda S."/>
            <person name="Kanamori-Katayama M."/>
            <person name="Suzuki M."/>
            <person name="Aoki J."/>
            <person name="Arakawa T."/>
            <person name="Iida J."/>
            <person name="Imamura K."/>
            <person name="Itoh M."/>
            <person name="Kato T."/>
            <person name="Kawaji H."/>
            <person name="Kawagashira N."/>
            <person name="Kawashima T."/>
            <person name="Kojima M."/>
            <person name="Kondo S."/>
            <person name="Konno H."/>
            <person name="Nakano K."/>
            <person name="Ninomiya N."/>
            <person name="Nishio T."/>
            <person name="Okada M."/>
            <person name="Plessy C."/>
            <person name="Shibata K."/>
            <person name="Shiraki T."/>
            <person name="Suzuki S."/>
            <person name="Tagami M."/>
            <person name="Waki K."/>
            <person name="Watahiki A."/>
            <person name="Okamura-Oho Y."/>
            <person name="Suzuki H."/>
            <person name="Kawai J."/>
            <person name="Hayashizaki Y."/>
        </authorList>
    </citation>
    <scope>NUCLEOTIDE SEQUENCE [LARGE SCALE MRNA]</scope>
    <source>
        <strain>C57BL/6J</strain>
        <tissue>Embryo</tissue>
        <tissue>Testis</tissue>
    </source>
</reference>
<reference key="2">
    <citation type="journal article" date="2004" name="Genome Res.">
        <title>The status, quality, and expansion of the NIH full-length cDNA project: the Mammalian Gene Collection (MGC).</title>
        <authorList>
            <consortium name="The MGC Project Team"/>
        </authorList>
    </citation>
    <scope>NUCLEOTIDE SEQUENCE [LARGE SCALE MRNA]</scope>
    <source>
        <strain>C57BL/6J</strain>
        <tissue>Olfactory epithelium</tissue>
    </source>
</reference>
<reference key="3">
    <citation type="journal article" date="2005" name="J. Biol. Chem.">
        <title>Isolation and functional characterization of a novel organic solute carrier protein, hOSCP1.</title>
        <authorList>
            <person name="Kobayashi Y."/>
            <person name="Shibusawa A."/>
            <person name="Saito H."/>
            <person name="Ohshiro N."/>
            <person name="Ohbayashi M."/>
            <person name="Kohyama N."/>
            <person name="Yamamoto T."/>
        </authorList>
    </citation>
    <scope>TISSUE SPECIFICITY</scope>
</reference>
<reference key="4">
    <citation type="journal article" date="2010" name="Cell">
        <title>A tissue-specific atlas of mouse protein phosphorylation and expression.</title>
        <authorList>
            <person name="Huttlin E.L."/>
            <person name="Jedrychowski M.P."/>
            <person name="Elias J.E."/>
            <person name="Goswami T."/>
            <person name="Rad R."/>
            <person name="Beausoleil S.A."/>
            <person name="Villen J."/>
            <person name="Haas W."/>
            <person name="Sowa M.E."/>
            <person name="Gygi S.P."/>
        </authorList>
    </citation>
    <scope>IDENTIFICATION BY MASS SPECTROMETRY [LARGE SCALE ANALYSIS]</scope>
    <source>
        <tissue>Brain</tissue>
        <tissue>Testis</tissue>
    </source>
</reference>
<evidence type="ECO:0000250" key="1"/>
<evidence type="ECO:0000269" key="2">
    <source>
    </source>
</evidence>
<evidence type="ECO:0000305" key="3"/>
<keyword id="KW-1003">Cell membrane</keyword>
<keyword id="KW-0472">Membrane</keyword>
<keyword id="KW-1185">Reference proteome</keyword>
<keyword id="KW-0813">Transport</keyword>
<proteinExistence type="evidence at protein level"/>
<feature type="chain" id="PRO_0000251966" description="Protein OSCP1">
    <location>
        <begin position="1"/>
        <end position="379"/>
    </location>
</feature>
<organism>
    <name type="scientific">Mus musculus</name>
    <name type="common">Mouse</name>
    <dbReference type="NCBI Taxonomy" id="10090"/>
    <lineage>
        <taxon>Eukaryota</taxon>
        <taxon>Metazoa</taxon>
        <taxon>Chordata</taxon>
        <taxon>Craniata</taxon>
        <taxon>Vertebrata</taxon>
        <taxon>Euteleostomi</taxon>
        <taxon>Mammalia</taxon>
        <taxon>Eutheria</taxon>
        <taxon>Euarchontoglires</taxon>
        <taxon>Glires</taxon>
        <taxon>Rodentia</taxon>
        <taxon>Myomorpha</taxon>
        <taxon>Muroidea</taxon>
        <taxon>Muridae</taxon>
        <taxon>Murinae</taxon>
        <taxon>Mus</taxon>
        <taxon>Mus</taxon>
    </lineage>
</organism>
<sequence length="379" mass="43232">MSVRTLPLLFLNLGGEMLYVLDQRLRAQNIPGDKARKVLNDIISTMFNRKFMDELFKPQELYSKKALRTVYDRLAHASIMRLNQASMDKLYDLMTMAFKYQVLLCPRPKDVLLVTFNHLDAIKGFVQDSPTVIHQVDETFRQLSEVYGKLSEGEFQLIRQTLLNFFQDLHIRVSTFLKDKVQNSNGRFVLPVSGPVPWGTEVPGVIRVFSVKGKEVKKMKFRHGGDYVAAQKEGSFELYGDRVLKLGTNMYSASRPVETHMSATSKNAASRAQENIVPNPLAKEELNFLARLMGGMEIKKPSGPEPGFRLNLFTTDEEEEHAALSRPEELSYEVISIQATQDQQRNEELARIMGEFEITEQLEQNTSKGDDLLAMMDRL</sequence>
<protein>
    <recommendedName>
        <fullName>Protein OSCP1</fullName>
    </recommendedName>
</protein>
<comment type="function">
    <text evidence="1">May be involved in drug clearance in the placenta.</text>
</comment>
<comment type="subcellular location">
    <subcellularLocation>
        <location evidence="1">Basal cell membrane</location>
    </subcellularLocation>
</comment>
<comment type="tissue specificity">
    <text evidence="2">Predominantly expressed in testis.</text>
</comment>
<comment type="sequence caution" evidence="3">
    <conflict type="frameshift">
        <sequence resource="EMBL-CDS" id="BAC36814"/>
    </conflict>
</comment>
<gene>
    <name type="primary">Oscp1</name>
</gene>
<accession>Q8BHW2</accession>
<accession>Q8BHQ7</accession>
<name>OSCP1_MOUSE</name>